<keyword id="KW-0001">2Fe-2S</keyword>
<keyword id="KW-0004">4Fe-4S</keyword>
<keyword id="KW-0963">Cytoplasm</keyword>
<keyword id="KW-0408">Iron</keyword>
<keyword id="KW-0411">Iron-sulfur</keyword>
<keyword id="KW-0479">Metal-binding</keyword>
<keyword id="KW-0496">Mitochondrion</keyword>
<keyword id="KW-1185">Reference proteome</keyword>
<proteinExistence type="inferred from homology"/>
<feature type="chain" id="PRO_0000392326" description="Anamorsin homolog">
    <location>
        <begin position="1"/>
        <end position="274"/>
    </location>
</feature>
<feature type="region of interest" description="N-terminal SAM-like domain" evidence="1">
    <location>
        <begin position="5"/>
        <end position="145"/>
    </location>
</feature>
<feature type="region of interest" description="Linker" evidence="1">
    <location>
        <begin position="145"/>
        <end position="189"/>
    </location>
</feature>
<feature type="region of interest" description="Fe-S binding site A" evidence="1">
    <location>
        <begin position="201"/>
        <end position="215"/>
    </location>
</feature>
<feature type="region of interest" description="Fe-S binding site B" evidence="1">
    <location>
        <begin position="235"/>
        <end position="249"/>
    </location>
</feature>
<feature type="short sequence motif" description="Cx2C motif 1" evidence="1">
    <location>
        <begin position="235"/>
        <end position="238"/>
    </location>
</feature>
<feature type="short sequence motif" description="Cx2C motif 2" evidence="1">
    <location>
        <begin position="246"/>
        <end position="249"/>
    </location>
</feature>
<feature type="binding site" evidence="1">
    <location>
        <position position="201"/>
    </location>
    <ligand>
        <name>[2Fe-2S] cluster</name>
        <dbReference type="ChEBI" id="CHEBI:190135"/>
    </ligand>
</feature>
<feature type="binding site" evidence="1">
    <location>
        <position position="210"/>
    </location>
    <ligand>
        <name>[2Fe-2S] cluster</name>
        <dbReference type="ChEBI" id="CHEBI:190135"/>
    </ligand>
</feature>
<feature type="binding site" evidence="1">
    <location>
        <position position="213"/>
    </location>
    <ligand>
        <name>[2Fe-2S] cluster</name>
        <dbReference type="ChEBI" id="CHEBI:190135"/>
    </ligand>
</feature>
<feature type="binding site" evidence="1">
    <location>
        <position position="215"/>
    </location>
    <ligand>
        <name>[2Fe-2S] cluster</name>
        <dbReference type="ChEBI" id="CHEBI:190135"/>
    </ligand>
</feature>
<feature type="binding site" evidence="1">
    <location>
        <position position="235"/>
    </location>
    <ligand>
        <name>[4Fe-4S] cluster</name>
        <dbReference type="ChEBI" id="CHEBI:49883"/>
    </ligand>
</feature>
<feature type="binding site" evidence="1">
    <location>
        <position position="238"/>
    </location>
    <ligand>
        <name>[4Fe-4S] cluster</name>
        <dbReference type="ChEBI" id="CHEBI:49883"/>
    </ligand>
</feature>
<feature type="binding site" evidence="1">
    <location>
        <position position="246"/>
    </location>
    <ligand>
        <name>[4Fe-4S] cluster</name>
        <dbReference type="ChEBI" id="CHEBI:49883"/>
    </ligand>
</feature>
<feature type="binding site" evidence="1">
    <location>
        <position position="249"/>
    </location>
    <ligand>
        <name>[4Fe-4S] cluster</name>
        <dbReference type="ChEBI" id="CHEBI:49883"/>
    </ligand>
</feature>
<protein>
    <recommendedName>
        <fullName evidence="1">Anamorsin homolog</fullName>
    </recommendedName>
    <alternativeName>
        <fullName evidence="1">Fe-S cluster assembly protein DRE2 homolog</fullName>
    </alternativeName>
</protein>
<sequence length="274" mass="29712">MDYGLQEGSRVLILWDGQVKADVLTELVRRIQATVKDDKLCQVENSQQLGKSHHQTSSFDAVLLGAVTPDMRPTSDCLVDLLSLLKPNGKLSLQLTKTDLDCDKLVYNLKLSGYVDVSMGSSTDLVEIKCSKPNYEMGSSSKLPFSSAVSSNQKSSADVSKIWSLSAQDVLDRDVELVDPDQLISEEDFKKPDPSTLKASCGGEKKRKACKNCTCGLAEELDKEAAAKVQPKSSCGNCYLGDAFRCASCPYKGLPAFKPGEKIVLSEDQLAADS</sequence>
<comment type="function">
    <text evidence="1">Component of the cytosolic iron-sulfur (Fe-S) protein assembly (CIA) machinery. Required for the maturation of extramitochondrial Fe-S proteins. Part of an electron transfer chain functioning in an early step of cytosolic Fe-S biogenesis, facilitating the de novo assembly of a [4Fe-4S] cluster on the cytosolic Fe-S scaffold complex. Electrons are transferred from NADPH via a FAD- and FMN-containing diflavin oxidoreductase. Together with the diflavin oxidoreductase, also required for the assembly of the diferric tyrosyl radical cofactor of ribonucleotide reductase (RNR), probably by providing electrons for reduction during radical cofactor maturation in the catalytic small subunit.</text>
</comment>
<comment type="cofactor">
    <cofactor evidence="1">
        <name>[2Fe-2S] cluster</name>
        <dbReference type="ChEBI" id="CHEBI:190135"/>
    </cofactor>
</comment>
<comment type="cofactor">
    <cofactor evidence="1">
        <name>[4Fe-4S] cluster</name>
        <dbReference type="ChEBI" id="CHEBI:49883"/>
    </cofactor>
</comment>
<comment type="subunit">
    <text evidence="1">Monomer.</text>
</comment>
<comment type="subcellular location">
    <subcellularLocation>
        <location evidence="1">Cytoplasm</location>
    </subcellularLocation>
    <subcellularLocation>
        <location evidence="1">Mitochondrion intermembrane space</location>
    </subcellularLocation>
</comment>
<comment type="domain">
    <text evidence="1">The C-terminal domain binds 2 Fe-S clusters but is otherwise mostly in an intrinsically disordered conformation.</text>
</comment>
<comment type="domain">
    <text evidence="1">The N-terminal domain has structural similarity with S-adenosyl-L-methionine-dependent methyltransferases, but does not bind S-adenosyl-L-methionine. It is required for correct assembly of the 2 Fe-S clusters.</text>
</comment>
<comment type="domain">
    <text evidence="1">The twin Cx2C motifs are involved in the recognition by the mitochondrial MIA40-ERV1 disulfide relay system. The formation of 2 disulfide bonds in the Cx2C motifs through dithiol/disulfide exchange reactions effectively traps the protein in the mitochondrial intermembrane space.</text>
</comment>
<comment type="similarity">
    <text evidence="1">Belongs to the anamorsin family.</text>
</comment>
<organism>
    <name type="scientific">Ixodes scapularis</name>
    <name type="common">Black-legged tick</name>
    <name type="synonym">Deer tick</name>
    <dbReference type="NCBI Taxonomy" id="6945"/>
    <lineage>
        <taxon>Eukaryota</taxon>
        <taxon>Metazoa</taxon>
        <taxon>Ecdysozoa</taxon>
        <taxon>Arthropoda</taxon>
        <taxon>Chelicerata</taxon>
        <taxon>Arachnida</taxon>
        <taxon>Acari</taxon>
        <taxon>Parasitiformes</taxon>
        <taxon>Ixodida</taxon>
        <taxon>Ixodoidea</taxon>
        <taxon>Ixodidae</taxon>
        <taxon>Ixodinae</taxon>
        <taxon>Ixodes</taxon>
    </lineage>
</organism>
<evidence type="ECO:0000255" key="1">
    <source>
        <dbReference type="HAMAP-Rule" id="MF_03115"/>
    </source>
</evidence>
<accession>B7PP17</accession>
<dbReference type="EMBL" id="DS755574">
    <property type="protein sequence ID" value="EEC08339.1"/>
    <property type="molecule type" value="Genomic_DNA"/>
</dbReference>
<dbReference type="RefSeq" id="XP_002435509.1">
    <property type="nucleotide sequence ID" value="XM_002435464.1"/>
</dbReference>
<dbReference type="SMR" id="B7PP17"/>
<dbReference type="FunCoup" id="B7PP17">
    <property type="interactions" value="1692"/>
</dbReference>
<dbReference type="STRING" id="6945.B7PP17"/>
<dbReference type="PaxDb" id="6945-B7PP17"/>
<dbReference type="EnsemblMetazoa" id="ISCW019144-RA">
    <property type="protein sequence ID" value="ISCW019144-PA"/>
    <property type="gene ID" value="ISCW019144"/>
</dbReference>
<dbReference type="KEGG" id="isc:8051844"/>
<dbReference type="CTD" id="57019"/>
<dbReference type="VEuPathDB" id="VectorBase:ISCI019144"/>
<dbReference type="VEuPathDB" id="VectorBase:ISCP_035557"/>
<dbReference type="VEuPathDB" id="VectorBase:ISCW019144"/>
<dbReference type="HOGENOM" id="CLU_064393_1_0_1"/>
<dbReference type="InParanoid" id="B7PP17"/>
<dbReference type="OrthoDB" id="311633at2759"/>
<dbReference type="PhylomeDB" id="B7PP17"/>
<dbReference type="Proteomes" id="UP000001555">
    <property type="component" value="Unassembled WGS sequence"/>
</dbReference>
<dbReference type="GO" id="GO:0005737">
    <property type="term" value="C:cytoplasm"/>
    <property type="evidence" value="ECO:0000318"/>
    <property type="project" value="GO_Central"/>
</dbReference>
<dbReference type="GO" id="GO:0005758">
    <property type="term" value="C:mitochondrial intermembrane space"/>
    <property type="evidence" value="ECO:0007669"/>
    <property type="project" value="UniProtKB-SubCell"/>
</dbReference>
<dbReference type="GO" id="GO:0051537">
    <property type="term" value="F:2 iron, 2 sulfur cluster binding"/>
    <property type="evidence" value="ECO:0007669"/>
    <property type="project" value="UniProtKB-UniRule"/>
</dbReference>
<dbReference type="GO" id="GO:0051539">
    <property type="term" value="F:4 iron, 4 sulfur cluster binding"/>
    <property type="evidence" value="ECO:0007669"/>
    <property type="project" value="UniProtKB-KW"/>
</dbReference>
<dbReference type="GO" id="GO:0009055">
    <property type="term" value="F:electron transfer activity"/>
    <property type="evidence" value="ECO:0007669"/>
    <property type="project" value="UniProtKB-UniRule"/>
</dbReference>
<dbReference type="GO" id="GO:0046872">
    <property type="term" value="F:metal ion binding"/>
    <property type="evidence" value="ECO:0007669"/>
    <property type="project" value="UniProtKB-KW"/>
</dbReference>
<dbReference type="GO" id="GO:0016226">
    <property type="term" value="P:iron-sulfur cluster assembly"/>
    <property type="evidence" value="ECO:0000318"/>
    <property type="project" value="GO_Central"/>
</dbReference>
<dbReference type="FunFam" id="3.40.50.150:FF:000902">
    <property type="match status" value="1"/>
</dbReference>
<dbReference type="Gene3D" id="3.40.50.150">
    <property type="entry name" value="Vaccinia Virus protein VP39"/>
    <property type="match status" value="1"/>
</dbReference>
<dbReference type="HAMAP" id="MF_03115">
    <property type="entry name" value="Anamorsin"/>
    <property type="match status" value="1"/>
</dbReference>
<dbReference type="InterPro" id="IPR007785">
    <property type="entry name" value="Anamorsin"/>
</dbReference>
<dbReference type="InterPro" id="IPR049011">
    <property type="entry name" value="Anamorsin_N_metazoan"/>
</dbReference>
<dbReference type="InterPro" id="IPR046408">
    <property type="entry name" value="CIAPIN1"/>
</dbReference>
<dbReference type="InterPro" id="IPR029063">
    <property type="entry name" value="SAM-dependent_MTases_sf"/>
</dbReference>
<dbReference type="PANTHER" id="PTHR13273">
    <property type="entry name" value="ANAMORSIN"/>
    <property type="match status" value="1"/>
</dbReference>
<dbReference type="PANTHER" id="PTHR13273:SF14">
    <property type="entry name" value="ANAMORSIN"/>
    <property type="match status" value="1"/>
</dbReference>
<dbReference type="Pfam" id="PF20922">
    <property type="entry name" value="Anamorsin_N"/>
    <property type="match status" value="1"/>
</dbReference>
<dbReference type="Pfam" id="PF05093">
    <property type="entry name" value="CIAPIN1"/>
    <property type="match status" value="2"/>
</dbReference>
<reference key="1">
    <citation type="submission" date="2008-03" db="EMBL/GenBank/DDBJ databases">
        <title>Annotation of Ixodes scapularis.</title>
        <authorList>
            <consortium name="Ixodes scapularis Genome Project Consortium"/>
            <person name="Caler E."/>
            <person name="Hannick L.I."/>
            <person name="Bidwell S."/>
            <person name="Joardar V."/>
            <person name="Thiagarajan M."/>
            <person name="Amedeo P."/>
            <person name="Galinsky K.J."/>
            <person name="Schobel S."/>
            <person name="Inman J."/>
            <person name="Hostetler J."/>
            <person name="Miller J."/>
            <person name="Hammond M."/>
            <person name="Megy K."/>
            <person name="Lawson D."/>
            <person name="Kodira C."/>
            <person name="Sutton G."/>
            <person name="Meyer J."/>
            <person name="Hill C.A."/>
            <person name="Birren B."/>
            <person name="Nene V."/>
            <person name="Collins F."/>
            <person name="Alarcon-Chaidez F."/>
            <person name="Wikel S."/>
            <person name="Strausberg R."/>
        </authorList>
    </citation>
    <scope>NUCLEOTIDE SEQUENCE [LARGE SCALE GENOMIC DNA]</scope>
    <source>
        <strain>Wikel</strain>
    </source>
</reference>
<name>DRE2_IXOSC</name>
<gene>
    <name type="ORF">ISCW019144</name>
</gene>